<reference key="1">
    <citation type="journal article" date="1991" name="Biochim. Biophys. Acta">
        <title>Nucleotide sequence analysis of purH and purD genes from Salmonella typhimurium.</title>
        <authorList>
            <person name="Chopra A.K."/>
            <person name="Peterson J.W."/>
            <person name="Prasad R."/>
        </authorList>
    </citation>
    <scope>NUCLEOTIDE SEQUENCE [GENOMIC DNA]</scope>
</reference>
<reference key="2">
    <citation type="journal article" date="2001" name="Nature">
        <title>Complete genome sequence of Salmonella enterica serovar Typhimurium LT2.</title>
        <authorList>
            <person name="McClelland M."/>
            <person name="Sanderson K.E."/>
            <person name="Spieth J."/>
            <person name="Clifton S.W."/>
            <person name="Latreille P."/>
            <person name="Courtney L."/>
            <person name="Porwollik S."/>
            <person name="Ali J."/>
            <person name="Dante M."/>
            <person name="Du F."/>
            <person name="Hou S."/>
            <person name="Layman D."/>
            <person name="Leonard S."/>
            <person name="Nguyen C."/>
            <person name="Scott K."/>
            <person name="Holmes A."/>
            <person name="Grewal N."/>
            <person name="Mulvaney E."/>
            <person name="Ryan E."/>
            <person name="Sun H."/>
            <person name="Florea L."/>
            <person name="Miller W."/>
            <person name="Stoneking T."/>
            <person name="Nhan M."/>
            <person name="Waterston R."/>
            <person name="Wilson R.K."/>
        </authorList>
    </citation>
    <scope>NUCLEOTIDE SEQUENCE [LARGE SCALE GENOMIC DNA]</scope>
    <source>
        <strain>LT2 / SGSC1412 / ATCC 700720</strain>
    </source>
</reference>
<dbReference type="EC" id="6.3.4.13" evidence="2"/>
<dbReference type="EMBL" id="M66160">
    <property type="protein sequence ID" value="AAA27198.1"/>
    <property type="molecule type" value="Genomic_DNA"/>
</dbReference>
<dbReference type="EMBL" id="AF170176">
    <property type="protein sequence ID" value="AAF33521.1"/>
    <property type="molecule type" value="Genomic_DNA"/>
</dbReference>
<dbReference type="EMBL" id="AE006468">
    <property type="protein sequence ID" value="AAL23003.1"/>
    <property type="molecule type" value="Genomic_DNA"/>
</dbReference>
<dbReference type="PIR" id="S18489">
    <property type="entry name" value="S18489"/>
</dbReference>
<dbReference type="RefSeq" id="NP_463044.1">
    <property type="nucleotide sequence ID" value="NC_003197.2"/>
</dbReference>
<dbReference type="RefSeq" id="WP_000866767.1">
    <property type="nucleotide sequence ID" value="NC_003197.2"/>
</dbReference>
<dbReference type="SMR" id="P26977"/>
<dbReference type="STRING" id="99287.STM4175"/>
<dbReference type="PaxDb" id="99287-STM4175"/>
<dbReference type="GeneID" id="1255701"/>
<dbReference type="KEGG" id="stm:STM4175"/>
<dbReference type="PATRIC" id="fig|99287.12.peg.4389"/>
<dbReference type="HOGENOM" id="CLU_027420_3_1_6"/>
<dbReference type="OMA" id="KATVCKY"/>
<dbReference type="PhylomeDB" id="P26977"/>
<dbReference type="BioCyc" id="SENT99287:STM4175-MONOMER"/>
<dbReference type="UniPathway" id="UPA00074">
    <property type="reaction ID" value="UER00125"/>
</dbReference>
<dbReference type="Proteomes" id="UP000001014">
    <property type="component" value="Chromosome"/>
</dbReference>
<dbReference type="GO" id="GO:0005524">
    <property type="term" value="F:ATP binding"/>
    <property type="evidence" value="ECO:0007669"/>
    <property type="project" value="UniProtKB-KW"/>
</dbReference>
<dbReference type="GO" id="GO:0046872">
    <property type="term" value="F:metal ion binding"/>
    <property type="evidence" value="ECO:0007669"/>
    <property type="project" value="UniProtKB-KW"/>
</dbReference>
<dbReference type="GO" id="GO:0004637">
    <property type="term" value="F:phosphoribosylamine-glycine ligase activity"/>
    <property type="evidence" value="ECO:0007669"/>
    <property type="project" value="UniProtKB-UniRule"/>
</dbReference>
<dbReference type="GO" id="GO:0006189">
    <property type="term" value="P:'de novo' IMP biosynthetic process"/>
    <property type="evidence" value="ECO:0007669"/>
    <property type="project" value="UniProtKB-UniRule"/>
</dbReference>
<dbReference type="GO" id="GO:0009113">
    <property type="term" value="P:purine nucleobase biosynthetic process"/>
    <property type="evidence" value="ECO:0007669"/>
    <property type="project" value="InterPro"/>
</dbReference>
<dbReference type="FunFam" id="3.30.470.20:FF:000031">
    <property type="entry name" value="Phosphoribosylamine--glycine ligase"/>
    <property type="match status" value="1"/>
</dbReference>
<dbReference type="FunFam" id="3.40.50.20:FF:000006">
    <property type="entry name" value="Phosphoribosylamine--glycine ligase, chloroplastic"/>
    <property type="match status" value="1"/>
</dbReference>
<dbReference type="FunFam" id="3.30.1490.20:FF:000006">
    <property type="entry name" value="phosphoribosylamine--glycine ligase, chloroplastic-like"/>
    <property type="match status" value="1"/>
</dbReference>
<dbReference type="FunFam" id="3.90.600.10:FF:000001">
    <property type="entry name" value="Trifunctional purine biosynthetic protein adenosine-3"/>
    <property type="match status" value="1"/>
</dbReference>
<dbReference type="Gene3D" id="3.40.50.20">
    <property type="match status" value="1"/>
</dbReference>
<dbReference type="Gene3D" id="3.30.1490.20">
    <property type="entry name" value="ATP-grasp fold, A domain"/>
    <property type="match status" value="1"/>
</dbReference>
<dbReference type="Gene3D" id="3.30.470.20">
    <property type="entry name" value="ATP-grasp fold, B domain"/>
    <property type="match status" value="1"/>
</dbReference>
<dbReference type="Gene3D" id="3.90.600.10">
    <property type="entry name" value="Phosphoribosylglycinamide synthetase, C-terminal domain"/>
    <property type="match status" value="1"/>
</dbReference>
<dbReference type="HAMAP" id="MF_00138">
    <property type="entry name" value="GARS"/>
    <property type="match status" value="1"/>
</dbReference>
<dbReference type="InterPro" id="IPR011761">
    <property type="entry name" value="ATP-grasp"/>
</dbReference>
<dbReference type="InterPro" id="IPR013815">
    <property type="entry name" value="ATP_grasp_subdomain_1"/>
</dbReference>
<dbReference type="InterPro" id="IPR016185">
    <property type="entry name" value="PreATP-grasp_dom_sf"/>
</dbReference>
<dbReference type="InterPro" id="IPR020561">
    <property type="entry name" value="PRibGlycinamid_synth_ATP-grasp"/>
</dbReference>
<dbReference type="InterPro" id="IPR000115">
    <property type="entry name" value="PRibGlycinamide_synth"/>
</dbReference>
<dbReference type="InterPro" id="IPR020560">
    <property type="entry name" value="PRibGlycinamide_synth_C-dom"/>
</dbReference>
<dbReference type="InterPro" id="IPR037123">
    <property type="entry name" value="PRibGlycinamide_synth_C_sf"/>
</dbReference>
<dbReference type="InterPro" id="IPR020559">
    <property type="entry name" value="PRibGlycinamide_synth_CS"/>
</dbReference>
<dbReference type="InterPro" id="IPR020562">
    <property type="entry name" value="PRibGlycinamide_synth_N"/>
</dbReference>
<dbReference type="InterPro" id="IPR011054">
    <property type="entry name" value="Rudment_hybrid_motif"/>
</dbReference>
<dbReference type="NCBIfam" id="TIGR00877">
    <property type="entry name" value="purD"/>
    <property type="match status" value="1"/>
</dbReference>
<dbReference type="PANTHER" id="PTHR43472">
    <property type="entry name" value="PHOSPHORIBOSYLAMINE--GLYCINE LIGASE"/>
    <property type="match status" value="1"/>
</dbReference>
<dbReference type="PANTHER" id="PTHR43472:SF1">
    <property type="entry name" value="PHOSPHORIBOSYLAMINE--GLYCINE LIGASE, CHLOROPLASTIC"/>
    <property type="match status" value="1"/>
</dbReference>
<dbReference type="Pfam" id="PF01071">
    <property type="entry name" value="GARS_A"/>
    <property type="match status" value="1"/>
</dbReference>
<dbReference type="Pfam" id="PF02843">
    <property type="entry name" value="GARS_C"/>
    <property type="match status" value="1"/>
</dbReference>
<dbReference type="Pfam" id="PF02844">
    <property type="entry name" value="GARS_N"/>
    <property type="match status" value="1"/>
</dbReference>
<dbReference type="SMART" id="SM01209">
    <property type="entry name" value="GARS_A"/>
    <property type="match status" value="1"/>
</dbReference>
<dbReference type="SMART" id="SM01210">
    <property type="entry name" value="GARS_C"/>
    <property type="match status" value="1"/>
</dbReference>
<dbReference type="SUPFAM" id="SSF56059">
    <property type="entry name" value="Glutathione synthetase ATP-binding domain-like"/>
    <property type="match status" value="1"/>
</dbReference>
<dbReference type="SUPFAM" id="SSF52440">
    <property type="entry name" value="PreATP-grasp domain"/>
    <property type="match status" value="1"/>
</dbReference>
<dbReference type="SUPFAM" id="SSF51246">
    <property type="entry name" value="Rudiment single hybrid motif"/>
    <property type="match status" value="1"/>
</dbReference>
<dbReference type="PROSITE" id="PS50975">
    <property type="entry name" value="ATP_GRASP"/>
    <property type="match status" value="1"/>
</dbReference>
<dbReference type="PROSITE" id="PS00184">
    <property type="entry name" value="GARS"/>
    <property type="match status" value="1"/>
</dbReference>
<keyword id="KW-0067">ATP-binding</keyword>
<keyword id="KW-0436">Ligase</keyword>
<keyword id="KW-0460">Magnesium</keyword>
<keyword id="KW-0464">Manganese</keyword>
<keyword id="KW-0479">Metal-binding</keyword>
<keyword id="KW-0547">Nucleotide-binding</keyword>
<keyword id="KW-0658">Purine biosynthesis</keyword>
<keyword id="KW-1185">Reference proteome</keyword>
<name>PUR2_SALTY</name>
<organism>
    <name type="scientific">Salmonella typhimurium (strain LT2 / SGSC1412 / ATCC 700720)</name>
    <dbReference type="NCBI Taxonomy" id="99287"/>
    <lineage>
        <taxon>Bacteria</taxon>
        <taxon>Pseudomonadati</taxon>
        <taxon>Pseudomonadota</taxon>
        <taxon>Gammaproteobacteria</taxon>
        <taxon>Enterobacterales</taxon>
        <taxon>Enterobacteriaceae</taxon>
        <taxon>Salmonella</taxon>
    </lineage>
</organism>
<evidence type="ECO:0000250" key="1"/>
<evidence type="ECO:0000255" key="2">
    <source>
        <dbReference type="HAMAP-Rule" id="MF_00138"/>
    </source>
</evidence>
<gene>
    <name evidence="2" type="primary">purD</name>
    <name type="ordered locus">STM4175</name>
    <name type="ORF">STMF1.31</name>
</gene>
<comment type="catalytic activity">
    <reaction evidence="2">
        <text>5-phospho-beta-D-ribosylamine + glycine + ATP = N(1)-(5-phospho-beta-D-ribosyl)glycinamide + ADP + phosphate + H(+)</text>
        <dbReference type="Rhea" id="RHEA:17453"/>
        <dbReference type="ChEBI" id="CHEBI:15378"/>
        <dbReference type="ChEBI" id="CHEBI:30616"/>
        <dbReference type="ChEBI" id="CHEBI:43474"/>
        <dbReference type="ChEBI" id="CHEBI:57305"/>
        <dbReference type="ChEBI" id="CHEBI:58681"/>
        <dbReference type="ChEBI" id="CHEBI:143788"/>
        <dbReference type="ChEBI" id="CHEBI:456216"/>
        <dbReference type="EC" id="6.3.4.13"/>
    </reaction>
</comment>
<comment type="cofactor">
    <cofactor evidence="1">
        <name>Mg(2+)</name>
        <dbReference type="ChEBI" id="CHEBI:18420"/>
    </cofactor>
    <cofactor evidence="1">
        <name>Mn(2+)</name>
        <dbReference type="ChEBI" id="CHEBI:29035"/>
    </cofactor>
    <text evidence="1">Binds 1 Mg(2+) or Mn(2+) ion per subunit.</text>
</comment>
<comment type="pathway">
    <text evidence="2">Purine metabolism; IMP biosynthesis via de novo pathway; N(1)-(5-phospho-D-ribosyl)glycinamide from 5-phospho-alpha-D-ribose 1-diphosphate: step 2/2.</text>
</comment>
<comment type="subunit">
    <text evidence="2">Monomer.</text>
</comment>
<comment type="similarity">
    <text evidence="2">Belongs to the GARS family.</text>
</comment>
<feature type="chain" id="PRO_0000151477" description="Phosphoribosylamine--glycine ligase">
    <location>
        <begin position="1"/>
        <end position="429"/>
    </location>
</feature>
<feature type="domain" description="ATP-grasp" evidence="2">
    <location>
        <begin position="109"/>
        <end position="316"/>
    </location>
</feature>
<feature type="binding site" evidence="2">
    <location>
        <begin position="135"/>
        <end position="196"/>
    </location>
    <ligand>
        <name>ATP</name>
        <dbReference type="ChEBI" id="CHEBI:30616"/>
    </ligand>
</feature>
<feature type="binding site" evidence="2">
    <location>
        <position position="286"/>
    </location>
    <ligand>
        <name>Mg(2+)</name>
        <dbReference type="ChEBI" id="CHEBI:18420"/>
    </ligand>
</feature>
<feature type="binding site" evidence="2">
    <location>
        <position position="288"/>
    </location>
    <ligand>
        <name>Mg(2+)</name>
        <dbReference type="ChEBI" id="CHEBI:18420"/>
    </ligand>
</feature>
<sequence>MKVLVIGNGGREHALAWKAAQSPLVDTVFVAPGNAGTALEPALQNVAIGVTDIPALLSFAQHEKIDLTIVGPEAPLVIGVVDAFRAAGLKIFGPTEGAAQLEGSKAFTKDFLARHQIPTAEYQNFTEIEPALAYLREKGAPIVIKADGLAAGKGVIVAMTLEEAEAAVHDMLAGNAFGDAGHRIVIEEFLDGEEASFIVMVDGEHVLPMATSQDHKRVGNGDTGPNTGGMGAYSPAPVVTDEVHQRTMERIIWPTVKGMAAEGNTYTGFLYAGLMIDKQGNPKVIEFNCRFGDPETQPIMLRMKSDLVDLCLAACDGKLDEKTSEWDERASLGVVIAAGGYPGSYSTGDEIHGLPLEEVADGKVFHAGTKLADDDRVLTSGGRVLCATALGHTVAEAQKRAYALMTDIRWDGSFSRNDIGWRAIEREQN</sequence>
<proteinExistence type="inferred from homology"/>
<protein>
    <recommendedName>
        <fullName evidence="2">Phosphoribosylamine--glycine ligase</fullName>
        <ecNumber evidence="2">6.3.4.13</ecNumber>
    </recommendedName>
    <alternativeName>
        <fullName evidence="2">GARS</fullName>
    </alternativeName>
    <alternativeName>
        <fullName evidence="2">Glycinamide ribonucleotide synthetase</fullName>
    </alternativeName>
    <alternativeName>
        <fullName evidence="2">Phosphoribosylglycinamide synthetase</fullName>
    </alternativeName>
</protein>
<accession>P26977</accession>